<evidence type="ECO:0000255" key="1">
    <source>
        <dbReference type="HAMAP-Rule" id="MF_01396"/>
    </source>
</evidence>
<keyword id="KW-0066">ATP synthesis</keyword>
<keyword id="KW-0997">Cell inner membrane</keyword>
<keyword id="KW-1003">Cell membrane</keyword>
<keyword id="KW-0138">CF(0)</keyword>
<keyword id="KW-0375">Hydrogen ion transport</keyword>
<keyword id="KW-0406">Ion transport</keyword>
<keyword id="KW-0446">Lipid-binding</keyword>
<keyword id="KW-0472">Membrane</keyword>
<keyword id="KW-1185">Reference proteome</keyword>
<keyword id="KW-0812">Transmembrane</keyword>
<keyword id="KW-1133">Transmembrane helix</keyword>
<keyword id="KW-0813">Transport</keyword>
<dbReference type="EMBL" id="AL111168">
    <property type="protein sequence ID" value="CAL35056.1"/>
    <property type="molecule type" value="Genomic_DNA"/>
</dbReference>
<dbReference type="PIR" id="G81367">
    <property type="entry name" value="G81367"/>
</dbReference>
<dbReference type="RefSeq" id="WP_002853292.1">
    <property type="nucleotide sequence ID" value="NZ_SZUC01000001.1"/>
</dbReference>
<dbReference type="RefSeq" id="YP_002344334.1">
    <property type="nucleotide sequence ID" value="NC_002163.1"/>
</dbReference>
<dbReference type="SMR" id="Q0P9W3"/>
<dbReference type="IntAct" id="Q0P9W3">
    <property type="interactions" value="4"/>
</dbReference>
<dbReference type="STRING" id="192222.Cj0936"/>
<dbReference type="PaxDb" id="192222-Cj0936"/>
<dbReference type="EnsemblBacteria" id="CAL35056">
    <property type="protein sequence ID" value="CAL35056"/>
    <property type="gene ID" value="Cj0936"/>
</dbReference>
<dbReference type="GeneID" id="905243"/>
<dbReference type="KEGG" id="cje:Cj0936"/>
<dbReference type="PATRIC" id="fig|192222.6.peg.920"/>
<dbReference type="eggNOG" id="COG0636">
    <property type="taxonomic scope" value="Bacteria"/>
</dbReference>
<dbReference type="HOGENOM" id="CLU_148047_0_1_7"/>
<dbReference type="OrthoDB" id="5339943at2"/>
<dbReference type="Proteomes" id="UP000000799">
    <property type="component" value="Chromosome"/>
</dbReference>
<dbReference type="GO" id="GO:0005886">
    <property type="term" value="C:plasma membrane"/>
    <property type="evidence" value="ECO:0007669"/>
    <property type="project" value="UniProtKB-SubCell"/>
</dbReference>
<dbReference type="GO" id="GO:0045259">
    <property type="term" value="C:proton-transporting ATP synthase complex"/>
    <property type="evidence" value="ECO:0007669"/>
    <property type="project" value="UniProtKB-KW"/>
</dbReference>
<dbReference type="GO" id="GO:0033177">
    <property type="term" value="C:proton-transporting two-sector ATPase complex, proton-transporting domain"/>
    <property type="evidence" value="ECO:0007669"/>
    <property type="project" value="InterPro"/>
</dbReference>
<dbReference type="GO" id="GO:0008289">
    <property type="term" value="F:lipid binding"/>
    <property type="evidence" value="ECO:0007669"/>
    <property type="project" value="UniProtKB-KW"/>
</dbReference>
<dbReference type="GO" id="GO:0046933">
    <property type="term" value="F:proton-transporting ATP synthase activity, rotational mechanism"/>
    <property type="evidence" value="ECO:0007669"/>
    <property type="project" value="UniProtKB-UniRule"/>
</dbReference>
<dbReference type="CDD" id="cd18121">
    <property type="entry name" value="ATP-synt_Fo_c"/>
    <property type="match status" value="1"/>
</dbReference>
<dbReference type="FunFam" id="1.20.20.10:FF:000002">
    <property type="entry name" value="ATP synthase subunit c"/>
    <property type="match status" value="1"/>
</dbReference>
<dbReference type="Gene3D" id="1.20.20.10">
    <property type="entry name" value="F1F0 ATP synthase subunit C"/>
    <property type="match status" value="1"/>
</dbReference>
<dbReference type="HAMAP" id="MF_01396">
    <property type="entry name" value="ATP_synth_c_bact"/>
    <property type="match status" value="1"/>
</dbReference>
<dbReference type="InterPro" id="IPR005953">
    <property type="entry name" value="ATP_synth_csu_bac/chlpt"/>
</dbReference>
<dbReference type="InterPro" id="IPR000454">
    <property type="entry name" value="ATP_synth_F0_csu"/>
</dbReference>
<dbReference type="InterPro" id="IPR020537">
    <property type="entry name" value="ATP_synth_F0_csu_DDCD_BS"/>
</dbReference>
<dbReference type="InterPro" id="IPR038662">
    <property type="entry name" value="ATP_synth_F0_csu_sf"/>
</dbReference>
<dbReference type="InterPro" id="IPR002379">
    <property type="entry name" value="ATPase_proteolipid_c-like_dom"/>
</dbReference>
<dbReference type="InterPro" id="IPR035921">
    <property type="entry name" value="F/V-ATP_Csub_sf"/>
</dbReference>
<dbReference type="NCBIfam" id="TIGR01260">
    <property type="entry name" value="ATP_synt_c"/>
    <property type="match status" value="1"/>
</dbReference>
<dbReference type="NCBIfam" id="NF006295">
    <property type="entry name" value="PRK08482.1"/>
    <property type="match status" value="1"/>
</dbReference>
<dbReference type="Pfam" id="PF00137">
    <property type="entry name" value="ATP-synt_C"/>
    <property type="match status" value="1"/>
</dbReference>
<dbReference type="PRINTS" id="PR00124">
    <property type="entry name" value="ATPASEC"/>
</dbReference>
<dbReference type="SUPFAM" id="SSF81333">
    <property type="entry name" value="F1F0 ATP synthase subunit C"/>
    <property type="match status" value="1"/>
</dbReference>
<dbReference type="PROSITE" id="PS00605">
    <property type="entry name" value="ATPASE_C"/>
    <property type="match status" value="1"/>
</dbReference>
<accession>Q0P9W3</accession>
<reference key="1">
    <citation type="journal article" date="2000" name="Nature">
        <title>The genome sequence of the food-borne pathogen Campylobacter jejuni reveals hypervariable sequences.</title>
        <authorList>
            <person name="Parkhill J."/>
            <person name="Wren B.W."/>
            <person name="Mungall K.L."/>
            <person name="Ketley J.M."/>
            <person name="Churcher C.M."/>
            <person name="Basham D."/>
            <person name="Chillingworth T."/>
            <person name="Davies R.M."/>
            <person name="Feltwell T."/>
            <person name="Holroyd S."/>
            <person name="Jagels K."/>
            <person name="Karlyshev A.V."/>
            <person name="Moule S."/>
            <person name="Pallen M.J."/>
            <person name="Penn C.W."/>
            <person name="Quail M.A."/>
            <person name="Rajandream M.A."/>
            <person name="Rutherford K.M."/>
            <person name="van Vliet A.H.M."/>
            <person name="Whitehead S."/>
            <person name="Barrell B.G."/>
        </authorList>
    </citation>
    <scope>NUCLEOTIDE SEQUENCE [LARGE SCALE GENOMIC DNA]</scope>
    <source>
        <strain>ATCC 700819 / NCTC 11168</strain>
    </source>
</reference>
<sequence>MKKVLFLLLACTAVAFAAETNAPVEQEAINVWIKAFSVLAAGLGLGVAALGGAIGMGNTAAATIAGTARNPGLGPKLMTTMFIALAMIEAQVIYALVIALIALYANPFIVLQ</sequence>
<protein>
    <recommendedName>
        <fullName evidence="1">ATP synthase subunit c</fullName>
    </recommendedName>
    <alternativeName>
        <fullName evidence="1">ATP synthase F(0) sector subunit c</fullName>
    </alternativeName>
    <alternativeName>
        <fullName evidence="1">F-type ATPase subunit c</fullName>
        <shortName evidence="1">F-ATPase subunit c</shortName>
    </alternativeName>
    <alternativeName>
        <fullName evidence="1">Lipid-binding protein</fullName>
    </alternativeName>
</protein>
<feature type="chain" id="PRO_5000075095" description="ATP synthase subunit c">
    <location>
        <begin position="1"/>
        <end position="112"/>
    </location>
</feature>
<feature type="transmembrane region" description="Helical" evidence="1">
    <location>
        <begin position="36"/>
        <end position="56"/>
    </location>
</feature>
<feature type="transmembrane region" description="Helical" evidence="1">
    <location>
        <begin position="81"/>
        <end position="101"/>
    </location>
</feature>
<feature type="site" description="Reversibly protonated during proton transport" evidence="1">
    <location>
        <position position="89"/>
    </location>
</feature>
<comment type="function">
    <text evidence="1">F(1)F(0) ATP synthase produces ATP from ADP in the presence of a proton or sodium gradient. F-type ATPases consist of two structural domains, F(1) containing the extramembraneous catalytic core and F(0) containing the membrane proton channel, linked together by a central stalk and a peripheral stalk. During catalysis, ATP synthesis in the catalytic domain of F(1) is coupled via a rotary mechanism of the central stalk subunits to proton translocation.</text>
</comment>
<comment type="subunit">
    <text evidence="1">F-type ATPases have 2 components, F(1) - the catalytic core - and F(0) - the membrane proton channel. F(1) has five subunits: alpha(3), beta(3), gamma(1), delta(1), epsilon(1). F(0) has three main subunits: a(1), b(2) and c(10-14). The alpha and beta chains form an alternating ring which encloses part of the gamma chain. F(1) is attached to F(0) by a central stalk formed by the gamma and epsilon chains, while a peripheral stalk is formed by the delta and b chains.</text>
</comment>
<comment type="subcellular location">
    <subcellularLocation>
        <location evidence="1">Cell inner membrane</location>
        <topology evidence="1">Multi-pass membrane protein</topology>
    </subcellularLocation>
</comment>
<comment type="similarity">
    <text evidence="1">Belongs to the ATPase C chain family.</text>
</comment>
<proteinExistence type="inferred from homology"/>
<name>ATPL_CAMJE</name>
<organism>
    <name type="scientific">Campylobacter jejuni subsp. jejuni serotype O:2 (strain ATCC 700819 / NCTC 11168)</name>
    <dbReference type="NCBI Taxonomy" id="192222"/>
    <lineage>
        <taxon>Bacteria</taxon>
        <taxon>Pseudomonadati</taxon>
        <taxon>Campylobacterota</taxon>
        <taxon>Epsilonproteobacteria</taxon>
        <taxon>Campylobacterales</taxon>
        <taxon>Campylobacteraceae</taxon>
        <taxon>Campylobacter</taxon>
    </lineage>
</organism>
<gene>
    <name evidence="1" type="primary">atpE</name>
    <name type="ordered locus">Cj0936</name>
</gene>